<dbReference type="EMBL" id="AY351651">
    <property type="protein sequence ID" value="AAQ02669.1"/>
    <property type="molecule type" value="mRNA"/>
</dbReference>
<dbReference type="EMBL" id="AY351652">
    <property type="protein sequence ID" value="AAQ02670.1"/>
    <property type="molecule type" value="mRNA"/>
</dbReference>
<dbReference type="RefSeq" id="NP_998909.1">
    <property type="nucleotide sequence ID" value="NM_213744.1"/>
</dbReference>
<dbReference type="FunCoup" id="Q7YQE5">
    <property type="interactions" value="37"/>
</dbReference>
<dbReference type="STRING" id="9823.ENSSSCP00000035900"/>
<dbReference type="GlyCosmos" id="Q7YQE5">
    <property type="glycosylation" value="2 sites, No reported glycans"/>
</dbReference>
<dbReference type="GlyGen" id="Q7YQE5">
    <property type="glycosylation" value="2 sites"/>
</dbReference>
<dbReference type="PaxDb" id="9823-ENSSSCP00000015966"/>
<dbReference type="Ensembl" id="ENSSSCT00025064554.1">
    <property type="protein sequence ID" value="ENSSSCP00025027493.1"/>
    <property type="gene ID" value="ENSSSCG00025047472.1"/>
</dbReference>
<dbReference type="Ensembl" id="ENSSSCT00035038384.1">
    <property type="protein sequence ID" value="ENSSSCP00035015319.1"/>
    <property type="gene ID" value="ENSSSCG00035029012.1"/>
</dbReference>
<dbReference type="Ensembl" id="ENSSSCT00040088386.1">
    <property type="protein sequence ID" value="ENSSSCP00040038847.1"/>
    <property type="gene ID" value="ENSSSCG00040064721.1"/>
</dbReference>
<dbReference type="Ensembl" id="ENSSSCT00045009592.1">
    <property type="protein sequence ID" value="ENSSSCP00045006550.1"/>
    <property type="gene ID" value="ENSSSCG00045005768.1"/>
</dbReference>
<dbReference type="Ensembl" id="ENSSSCT00050024535.1">
    <property type="protein sequence ID" value="ENSSSCP00050010265.1"/>
    <property type="gene ID" value="ENSSSCG00050018071.1"/>
</dbReference>
<dbReference type="Ensembl" id="ENSSSCT00055023814.1">
    <property type="protein sequence ID" value="ENSSSCP00055018838.1"/>
    <property type="gene ID" value="ENSSSCG00055012165.1"/>
</dbReference>
<dbReference type="Ensembl" id="ENSSSCT00065022278.1">
    <property type="protein sequence ID" value="ENSSSCP00065009038.1"/>
    <property type="gene ID" value="ENSSSCG00065016779.1"/>
</dbReference>
<dbReference type="Ensembl" id="ENSSSCT00070015611.1">
    <property type="protein sequence ID" value="ENSSSCP00070012917.1"/>
    <property type="gene ID" value="ENSSSCG00070008080.1"/>
</dbReference>
<dbReference type="Ensembl" id="ENSSSCT00090024809">
    <property type="protein sequence ID" value="ENSSSCP00090015479"/>
    <property type="gene ID" value="ENSSSCG00090014107"/>
</dbReference>
<dbReference type="Ensembl" id="ENSSSCT00105010017">
    <property type="protein sequence ID" value="ENSSSCP00105007326"/>
    <property type="gene ID" value="ENSSSCG00105005025"/>
</dbReference>
<dbReference type="Ensembl" id="ENSSSCT00110023659">
    <property type="protein sequence ID" value="ENSSSCP00110016025"/>
    <property type="gene ID" value="ENSSSCG00110012316"/>
</dbReference>
<dbReference type="Ensembl" id="ENSSSCT00115009626">
    <property type="protein sequence ID" value="ENSSSCP00115009051"/>
    <property type="gene ID" value="ENSSSCG00115005572"/>
</dbReference>
<dbReference type="Ensembl" id="ENSSSCT00130015904">
    <property type="protein sequence ID" value="ENSSSCP00130010759"/>
    <property type="gene ID" value="ENSSSCG00130008597"/>
</dbReference>
<dbReference type="GeneID" id="396570"/>
<dbReference type="KEGG" id="ssc:396570"/>
<dbReference type="CTD" id="349633"/>
<dbReference type="eggNOG" id="ENOG502RTZP">
    <property type="taxonomic scope" value="Eukaryota"/>
</dbReference>
<dbReference type="HOGENOM" id="CLU_099483_1_0_1"/>
<dbReference type="InParanoid" id="Q7YQE5"/>
<dbReference type="OrthoDB" id="9446289at2759"/>
<dbReference type="Reactome" id="R-SSC-163125">
    <property type="pathway name" value="Post-translational modification: synthesis of GPI-anchored proteins"/>
</dbReference>
<dbReference type="Proteomes" id="UP000008227">
    <property type="component" value="Unplaced"/>
</dbReference>
<dbReference type="Proteomes" id="UP000314985">
    <property type="component" value="Chromosome 9"/>
</dbReference>
<dbReference type="Proteomes" id="UP000694570">
    <property type="component" value="Unplaced"/>
</dbReference>
<dbReference type="Proteomes" id="UP000694571">
    <property type="component" value="Unplaced"/>
</dbReference>
<dbReference type="Proteomes" id="UP000694720">
    <property type="component" value="Unplaced"/>
</dbReference>
<dbReference type="Proteomes" id="UP000694722">
    <property type="component" value="Unplaced"/>
</dbReference>
<dbReference type="Proteomes" id="UP000694723">
    <property type="component" value="Unplaced"/>
</dbReference>
<dbReference type="Proteomes" id="UP000694724">
    <property type="component" value="Unplaced"/>
</dbReference>
<dbReference type="Proteomes" id="UP000694725">
    <property type="component" value="Unplaced"/>
</dbReference>
<dbReference type="Proteomes" id="UP000694726">
    <property type="component" value="Unplaced"/>
</dbReference>
<dbReference type="Proteomes" id="UP000694727">
    <property type="component" value="Unplaced"/>
</dbReference>
<dbReference type="Proteomes" id="UP000694728">
    <property type="component" value="Unplaced"/>
</dbReference>
<dbReference type="GO" id="GO:0016324">
    <property type="term" value="C:apical plasma membrane"/>
    <property type="evidence" value="ECO:0000250"/>
    <property type="project" value="UniProtKB"/>
</dbReference>
<dbReference type="GO" id="GO:0009897">
    <property type="term" value="C:external side of plasma membrane"/>
    <property type="evidence" value="ECO:0000318"/>
    <property type="project" value="GO_Central"/>
</dbReference>
<dbReference type="GO" id="GO:0030154">
    <property type="term" value="P:cell differentiation"/>
    <property type="evidence" value="ECO:0007669"/>
    <property type="project" value="UniProtKB-KW"/>
</dbReference>
<dbReference type="GO" id="GO:0001953">
    <property type="term" value="P:negative regulation of cell-matrix adhesion"/>
    <property type="evidence" value="ECO:0000250"/>
    <property type="project" value="UniProtKB"/>
</dbReference>
<dbReference type="GO" id="GO:0030335">
    <property type="term" value="P:positive regulation of cell migration"/>
    <property type="evidence" value="ECO:0000250"/>
    <property type="project" value="UniProtKB"/>
</dbReference>
<dbReference type="GO" id="GO:0035313">
    <property type="term" value="P:wound healing, spreading of epidermal cells"/>
    <property type="evidence" value="ECO:0000250"/>
    <property type="project" value="UniProtKB"/>
</dbReference>
<dbReference type="InterPro" id="IPR026184">
    <property type="entry name" value="PLET1"/>
</dbReference>
<dbReference type="InterPro" id="IPR002861">
    <property type="entry name" value="Reeler_dom"/>
</dbReference>
<dbReference type="PANTHER" id="PTHR22527">
    <property type="entry name" value="PLACENTA-EXPRESSED TRANSCRIPT 1 PROTEIN"/>
    <property type="match status" value="1"/>
</dbReference>
<dbReference type="PANTHER" id="PTHR22527:SF2">
    <property type="entry name" value="PLACENTA-EXPRESSED TRANSCRIPT 1 PROTEIN"/>
    <property type="match status" value="1"/>
</dbReference>
<dbReference type="Pfam" id="PF02014">
    <property type="entry name" value="Reeler"/>
    <property type="match status" value="1"/>
</dbReference>
<accession>Q7YQE5</accession>
<proteinExistence type="evidence at transcript level"/>
<evidence type="ECO:0000250" key="1"/>
<evidence type="ECO:0000255" key="2"/>
<evidence type="ECO:0000305" key="3"/>
<comment type="function">
    <text evidence="1">Modulates leading keratinocyte migration and cellular adhesion to matrix proteins during a wound-healing response and promotes wound repair. May play a role during trichilemmal differentiation of the hair follicle (By similarity).</text>
</comment>
<comment type="subcellular location">
    <subcellularLocation>
        <location evidence="3">Membrane</location>
        <topology evidence="3">Single-pass type I membrane protein</topology>
    </subcellularLocation>
    <subcellularLocation>
        <location evidence="1">Apical cell membrane</location>
    </subcellularLocation>
    <text evidence="1">Localized at the apical membrane of the most differentiated keratinocytes of the outer root sheath (ORS), clustered mainly in planar regions of the plasma membrane at the base of microvilli.</text>
</comment>
<comment type="tissue specificity">
    <text>Highly expressed in placenta.</text>
</comment>
<comment type="caution">
    <text evidence="3">For human, rat and golden hamster orthologs, a GPI-anchor has been predicted. However, in the case of pig and bovine, no GPI-anchor motifs have been detected, but it does not rule out the possibility of a GPI-anchor instead of a single-pass type I membrane protein.</text>
</comment>
<protein>
    <recommendedName>
        <fullName>Placenta-expressed transcript 1 protein</fullName>
    </recommendedName>
</protein>
<keyword id="KW-1003">Cell membrane</keyword>
<keyword id="KW-0221">Differentiation</keyword>
<keyword id="KW-0325">Glycoprotein</keyword>
<keyword id="KW-0472">Membrane</keyword>
<keyword id="KW-1185">Reference proteome</keyword>
<keyword id="KW-0732">Signal</keyword>
<keyword id="KW-0812">Transmembrane</keyword>
<keyword id="KW-1133">Transmembrane helix</keyword>
<organism>
    <name type="scientific">Sus scrofa</name>
    <name type="common">Pig</name>
    <dbReference type="NCBI Taxonomy" id="9823"/>
    <lineage>
        <taxon>Eukaryota</taxon>
        <taxon>Metazoa</taxon>
        <taxon>Chordata</taxon>
        <taxon>Craniata</taxon>
        <taxon>Vertebrata</taxon>
        <taxon>Euteleostomi</taxon>
        <taxon>Mammalia</taxon>
        <taxon>Eutheria</taxon>
        <taxon>Laurasiatheria</taxon>
        <taxon>Artiodactyla</taxon>
        <taxon>Suina</taxon>
        <taxon>Suidae</taxon>
        <taxon>Sus</taxon>
    </lineage>
</organism>
<feature type="signal peptide" evidence="2">
    <location>
        <begin position="1"/>
        <end position="26"/>
    </location>
</feature>
<feature type="chain" id="PRO_0000320955" description="Placenta-expressed transcript 1 protein">
    <location>
        <begin position="27"/>
        <end position="210"/>
    </location>
</feature>
<feature type="topological domain" description="Extracellular" evidence="2">
    <location>
        <begin position="27"/>
        <end position="189"/>
    </location>
</feature>
<feature type="transmembrane region" description="Helical" evidence="2">
    <location>
        <begin position="190"/>
        <end position="209"/>
    </location>
</feature>
<feature type="topological domain" description="Cytoplasmic" evidence="2">
    <location>
        <position position="210"/>
    </location>
</feature>
<feature type="glycosylation site" description="N-linked (GlcNAc...) asparagine" evidence="2">
    <location>
        <position position="67"/>
    </location>
</feature>
<feature type="glycosylation site" description="N-linked (GlcNAc...) asparagine" evidence="2">
    <location>
        <position position="94"/>
    </location>
</feature>
<sequence>MAVLGSPLLPLRLFLCFGLLFFSASCTDHPDQCMIFNKVTSIHNSRIQVNPKVYESNTVYTVSVPVNNTISSVVMKAVDMHHSVIGFWQKADMNCTSSALYHVKSPHEHVLEAKWLSPASTNINTVELQVFVVDFHKEATASVLKLEKSGTSPALITKLITTKSNTVTTTKPTVITTHTTHKNSANRVFRSPVRDAIQILLAFLTSKLLF</sequence>
<reference key="1">
    <citation type="journal article" date="2004" name="Genomics">
        <title>PLET1 (C11orf34), a highly expressed and processed novel gene in pig and mouse placenta, is transcribed but poorly spliced in human.</title>
        <authorList>
            <person name="Zhao S.-H."/>
            <person name="Simmons D.G."/>
            <person name="Cross J.C."/>
            <person name="Scheetz T.E."/>
            <person name="Casavant T.L."/>
            <person name="Soares M.B."/>
            <person name="Tuggle C.K."/>
        </authorList>
    </citation>
    <scope>NUCLEOTIDE SEQUENCE [MRNA]</scope>
    <source>
        <tissue>Placenta</tissue>
    </source>
</reference>
<gene>
    <name type="primary">PLET1</name>
</gene>
<name>PLET1_PIG</name>